<organism>
    <name type="scientific">Burkholderia orbicola (strain AU 1054)</name>
    <dbReference type="NCBI Taxonomy" id="331271"/>
    <lineage>
        <taxon>Bacteria</taxon>
        <taxon>Pseudomonadati</taxon>
        <taxon>Pseudomonadota</taxon>
        <taxon>Betaproteobacteria</taxon>
        <taxon>Burkholderiales</taxon>
        <taxon>Burkholderiaceae</taxon>
        <taxon>Burkholderia</taxon>
        <taxon>Burkholderia cepacia complex</taxon>
        <taxon>Burkholderia orbicola</taxon>
    </lineage>
</organism>
<reference key="1">
    <citation type="submission" date="2006-05" db="EMBL/GenBank/DDBJ databases">
        <title>Complete sequence of chromosome 2 of Burkholderia cenocepacia AU 1054.</title>
        <authorList>
            <consortium name="US DOE Joint Genome Institute"/>
            <person name="Copeland A."/>
            <person name="Lucas S."/>
            <person name="Lapidus A."/>
            <person name="Barry K."/>
            <person name="Detter J.C."/>
            <person name="Glavina del Rio T."/>
            <person name="Hammon N."/>
            <person name="Israni S."/>
            <person name="Dalin E."/>
            <person name="Tice H."/>
            <person name="Pitluck S."/>
            <person name="Chain P."/>
            <person name="Malfatti S."/>
            <person name="Shin M."/>
            <person name="Vergez L."/>
            <person name="Schmutz J."/>
            <person name="Larimer F."/>
            <person name="Land M."/>
            <person name="Hauser L."/>
            <person name="Kyrpides N."/>
            <person name="Lykidis A."/>
            <person name="LiPuma J.J."/>
            <person name="Konstantinidis K."/>
            <person name="Tiedje J.M."/>
            <person name="Richardson P."/>
        </authorList>
    </citation>
    <scope>NUCLEOTIDE SEQUENCE [LARGE SCALE GENOMIC DNA]</scope>
    <source>
        <strain>AU 1054</strain>
    </source>
</reference>
<keyword id="KW-0378">Hydrolase</keyword>
<accession>Q1BR24</accession>
<name>GCH41_BURO1</name>
<comment type="function">
    <text evidence="1">Converts GTP to 7,8-dihydroneopterin triphosphate.</text>
</comment>
<comment type="catalytic activity">
    <reaction evidence="1">
        <text>GTP + H2O = 7,8-dihydroneopterin 3'-triphosphate + formate + H(+)</text>
        <dbReference type="Rhea" id="RHEA:17473"/>
        <dbReference type="ChEBI" id="CHEBI:15377"/>
        <dbReference type="ChEBI" id="CHEBI:15378"/>
        <dbReference type="ChEBI" id="CHEBI:15740"/>
        <dbReference type="ChEBI" id="CHEBI:37565"/>
        <dbReference type="ChEBI" id="CHEBI:58462"/>
        <dbReference type="EC" id="3.5.4.16"/>
    </reaction>
</comment>
<comment type="pathway">
    <text evidence="1">Cofactor biosynthesis; 7,8-dihydroneopterin triphosphate biosynthesis; 7,8-dihydroneopterin triphosphate from GTP: step 1/1.</text>
</comment>
<comment type="similarity">
    <text evidence="1">Belongs to the GTP cyclohydrolase IV family.</text>
</comment>
<protein>
    <recommendedName>
        <fullName evidence="1">GTP cyclohydrolase FolE2 1</fullName>
        <ecNumber evidence="1">3.5.4.16</ecNumber>
    </recommendedName>
</protein>
<sequence>MEKALHRISSMNAALPDISLTDAAPGRRPLEWVGMQGIDLPVVVAEPGCRRDVHARADVQVDLPAPQVKGIHMSRLYGLLDGLADGEALSPAGLQRMLRAMVDSHRDCETRSARVRLRFDLLARRTALVTEGLAGWKAYPVRLDATLAGDAFALRAQVTVVYSSTCPCSAALSRHWIEQAFLTAFGHEARVEPTAVAAWLKRHAMAATPHSQRSEAVVSVALPADGTTLGLLDLIDRVEQALGTPVQTAVKRADEQAFAVLNGGNLMFVEDAARRVQAALEDRHASPRVRVRHLESLHPHDAVAWAAPLREGADAC</sequence>
<evidence type="ECO:0000255" key="1">
    <source>
        <dbReference type="HAMAP-Rule" id="MF_01527"/>
    </source>
</evidence>
<proteinExistence type="inferred from homology"/>
<feature type="chain" id="PRO_0000289476" description="GTP cyclohydrolase FolE2 1">
    <location>
        <begin position="1"/>
        <end position="316"/>
    </location>
</feature>
<feature type="site" description="May be catalytically important" evidence="1">
    <location>
        <position position="166"/>
    </location>
</feature>
<dbReference type="EC" id="3.5.4.16" evidence="1"/>
<dbReference type="EMBL" id="CP000379">
    <property type="protein sequence ID" value="ABF77931.1"/>
    <property type="molecule type" value="Genomic_DNA"/>
</dbReference>
<dbReference type="SMR" id="Q1BR24"/>
<dbReference type="HOGENOM" id="CLU_062816_0_0_4"/>
<dbReference type="UniPathway" id="UPA00848">
    <property type="reaction ID" value="UER00151"/>
</dbReference>
<dbReference type="GO" id="GO:0003934">
    <property type="term" value="F:GTP cyclohydrolase I activity"/>
    <property type="evidence" value="ECO:0007669"/>
    <property type="project" value="UniProtKB-UniRule"/>
</dbReference>
<dbReference type="GO" id="GO:0046654">
    <property type="term" value="P:tetrahydrofolate biosynthetic process"/>
    <property type="evidence" value="ECO:0007669"/>
    <property type="project" value="UniProtKB-UniRule"/>
</dbReference>
<dbReference type="Gene3D" id="3.10.270.10">
    <property type="entry name" value="Urate Oxidase"/>
    <property type="match status" value="1"/>
</dbReference>
<dbReference type="HAMAP" id="MF_01527_B">
    <property type="entry name" value="GTP_cyclohydrol_B"/>
    <property type="match status" value="1"/>
</dbReference>
<dbReference type="InterPro" id="IPR022838">
    <property type="entry name" value="GTP_cyclohydrolase_FolE2"/>
</dbReference>
<dbReference type="InterPro" id="IPR003801">
    <property type="entry name" value="GTP_cyclohydrolase_FolE2/MptA"/>
</dbReference>
<dbReference type="NCBIfam" id="NF010200">
    <property type="entry name" value="PRK13674.1-1"/>
    <property type="match status" value="1"/>
</dbReference>
<dbReference type="PANTHER" id="PTHR36445">
    <property type="entry name" value="GTP CYCLOHYDROLASE MPTA"/>
    <property type="match status" value="1"/>
</dbReference>
<dbReference type="PANTHER" id="PTHR36445:SF1">
    <property type="entry name" value="GTP CYCLOHYDROLASE MPTA"/>
    <property type="match status" value="1"/>
</dbReference>
<dbReference type="Pfam" id="PF02649">
    <property type="entry name" value="GCHY-1"/>
    <property type="match status" value="1"/>
</dbReference>
<gene>
    <name evidence="1" type="primary">folE2-1</name>
    <name type="ordered locus">Bcen_3035</name>
</gene>